<evidence type="ECO:0000255" key="1">
    <source>
        <dbReference type="HAMAP-Rule" id="MF_00283"/>
    </source>
</evidence>
<feature type="chain" id="PRO_0000126845" description="Phenylalanine--tRNA ligase beta subunit">
    <location>
        <begin position="1"/>
        <end position="820"/>
    </location>
</feature>
<feature type="domain" description="tRNA-binding" evidence="1">
    <location>
        <begin position="42"/>
        <end position="154"/>
    </location>
</feature>
<feature type="domain" description="B5" evidence="1">
    <location>
        <begin position="413"/>
        <end position="489"/>
    </location>
</feature>
<feature type="domain" description="FDX-ACB" evidence="1">
    <location>
        <begin position="727"/>
        <end position="820"/>
    </location>
</feature>
<feature type="binding site" evidence="1">
    <location>
        <position position="467"/>
    </location>
    <ligand>
        <name>Mg(2+)</name>
        <dbReference type="ChEBI" id="CHEBI:18420"/>
        <note>shared with alpha subunit</note>
    </ligand>
</feature>
<feature type="binding site" evidence="1">
    <location>
        <position position="473"/>
    </location>
    <ligand>
        <name>Mg(2+)</name>
        <dbReference type="ChEBI" id="CHEBI:18420"/>
        <note>shared with alpha subunit</note>
    </ligand>
</feature>
<feature type="binding site" evidence="1">
    <location>
        <position position="476"/>
    </location>
    <ligand>
        <name>Mg(2+)</name>
        <dbReference type="ChEBI" id="CHEBI:18420"/>
        <note>shared with alpha subunit</note>
    </ligand>
</feature>
<feature type="binding site" evidence="1">
    <location>
        <position position="477"/>
    </location>
    <ligand>
        <name>Mg(2+)</name>
        <dbReference type="ChEBI" id="CHEBI:18420"/>
        <note>shared with alpha subunit</note>
    </ligand>
</feature>
<organism>
    <name type="scientific">Bacteroides thetaiotaomicron (strain ATCC 29148 / DSM 2079 / JCM 5827 / CCUG 10774 / NCTC 10582 / VPI-5482 / E50)</name>
    <dbReference type="NCBI Taxonomy" id="226186"/>
    <lineage>
        <taxon>Bacteria</taxon>
        <taxon>Pseudomonadati</taxon>
        <taxon>Bacteroidota</taxon>
        <taxon>Bacteroidia</taxon>
        <taxon>Bacteroidales</taxon>
        <taxon>Bacteroidaceae</taxon>
        <taxon>Bacteroides</taxon>
    </lineage>
</organism>
<name>SYFB_BACTN</name>
<accession>Q8AA39</accession>
<proteinExistence type="inferred from homology"/>
<comment type="catalytic activity">
    <reaction evidence="1">
        <text>tRNA(Phe) + L-phenylalanine + ATP = L-phenylalanyl-tRNA(Phe) + AMP + diphosphate + H(+)</text>
        <dbReference type="Rhea" id="RHEA:19413"/>
        <dbReference type="Rhea" id="RHEA-COMP:9668"/>
        <dbReference type="Rhea" id="RHEA-COMP:9699"/>
        <dbReference type="ChEBI" id="CHEBI:15378"/>
        <dbReference type="ChEBI" id="CHEBI:30616"/>
        <dbReference type="ChEBI" id="CHEBI:33019"/>
        <dbReference type="ChEBI" id="CHEBI:58095"/>
        <dbReference type="ChEBI" id="CHEBI:78442"/>
        <dbReference type="ChEBI" id="CHEBI:78531"/>
        <dbReference type="ChEBI" id="CHEBI:456215"/>
        <dbReference type="EC" id="6.1.1.20"/>
    </reaction>
</comment>
<comment type="cofactor">
    <cofactor evidence="1">
        <name>Mg(2+)</name>
        <dbReference type="ChEBI" id="CHEBI:18420"/>
    </cofactor>
    <text evidence="1">Binds 2 magnesium ions per tetramer.</text>
</comment>
<comment type="subunit">
    <text evidence="1">Tetramer of two alpha and two beta subunits.</text>
</comment>
<comment type="subcellular location">
    <subcellularLocation>
        <location evidence="1">Cytoplasm</location>
    </subcellularLocation>
</comment>
<comment type="similarity">
    <text evidence="1">Belongs to the phenylalanyl-tRNA synthetase beta subunit family. Type 1 subfamily.</text>
</comment>
<gene>
    <name evidence="1" type="primary">pheT</name>
    <name type="ordered locus">BT_0626</name>
</gene>
<keyword id="KW-0030">Aminoacyl-tRNA synthetase</keyword>
<keyword id="KW-0067">ATP-binding</keyword>
<keyword id="KW-0963">Cytoplasm</keyword>
<keyword id="KW-0436">Ligase</keyword>
<keyword id="KW-0460">Magnesium</keyword>
<keyword id="KW-0479">Metal-binding</keyword>
<keyword id="KW-0547">Nucleotide-binding</keyword>
<keyword id="KW-0648">Protein biosynthesis</keyword>
<keyword id="KW-1185">Reference proteome</keyword>
<keyword id="KW-0694">RNA-binding</keyword>
<keyword id="KW-0820">tRNA-binding</keyword>
<reference key="1">
    <citation type="journal article" date="2003" name="Science">
        <title>A genomic view of the human-Bacteroides thetaiotaomicron symbiosis.</title>
        <authorList>
            <person name="Xu J."/>
            <person name="Bjursell M.K."/>
            <person name="Himrod J."/>
            <person name="Deng S."/>
            <person name="Carmichael L.K."/>
            <person name="Chiang H.C."/>
            <person name="Hooper L.V."/>
            <person name="Gordon J.I."/>
        </authorList>
    </citation>
    <scope>NUCLEOTIDE SEQUENCE [LARGE SCALE GENOMIC DNA]</scope>
    <source>
        <strain>ATCC 29148 / DSM 2079 / JCM 5827 / CCUG 10774 / NCTC 10582 / VPI-5482 / E50</strain>
    </source>
</reference>
<dbReference type="EC" id="6.1.1.20" evidence="1"/>
<dbReference type="EMBL" id="AE015928">
    <property type="protein sequence ID" value="AAO75733.1"/>
    <property type="molecule type" value="Genomic_DNA"/>
</dbReference>
<dbReference type="RefSeq" id="NP_809539.1">
    <property type="nucleotide sequence ID" value="NC_004663.1"/>
</dbReference>
<dbReference type="RefSeq" id="WP_011107364.1">
    <property type="nucleotide sequence ID" value="NC_004663.1"/>
</dbReference>
<dbReference type="SMR" id="Q8AA39"/>
<dbReference type="FunCoup" id="Q8AA39">
    <property type="interactions" value="460"/>
</dbReference>
<dbReference type="STRING" id="226186.BT_0626"/>
<dbReference type="PaxDb" id="226186-BT_0626"/>
<dbReference type="EnsemblBacteria" id="AAO75733">
    <property type="protein sequence ID" value="AAO75733"/>
    <property type="gene ID" value="BT_0626"/>
</dbReference>
<dbReference type="GeneID" id="60926586"/>
<dbReference type="KEGG" id="bth:BT_0626"/>
<dbReference type="PATRIC" id="fig|226186.12.peg.635"/>
<dbReference type="eggNOG" id="COG0072">
    <property type="taxonomic scope" value="Bacteria"/>
</dbReference>
<dbReference type="eggNOG" id="COG0073">
    <property type="taxonomic scope" value="Bacteria"/>
</dbReference>
<dbReference type="HOGENOM" id="CLU_016891_0_0_10"/>
<dbReference type="InParanoid" id="Q8AA39"/>
<dbReference type="OrthoDB" id="9805455at2"/>
<dbReference type="Proteomes" id="UP000001414">
    <property type="component" value="Chromosome"/>
</dbReference>
<dbReference type="GO" id="GO:0009328">
    <property type="term" value="C:phenylalanine-tRNA ligase complex"/>
    <property type="evidence" value="ECO:0000318"/>
    <property type="project" value="GO_Central"/>
</dbReference>
<dbReference type="GO" id="GO:0005524">
    <property type="term" value="F:ATP binding"/>
    <property type="evidence" value="ECO:0007669"/>
    <property type="project" value="UniProtKB-UniRule"/>
</dbReference>
<dbReference type="GO" id="GO:0000287">
    <property type="term" value="F:magnesium ion binding"/>
    <property type="evidence" value="ECO:0007669"/>
    <property type="project" value="UniProtKB-UniRule"/>
</dbReference>
<dbReference type="GO" id="GO:0004826">
    <property type="term" value="F:phenylalanine-tRNA ligase activity"/>
    <property type="evidence" value="ECO:0007669"/>
    <property type="project" value="UniProtKB-UniRule"/>
</dbReference>
<dbReference type="GO" id="GO:0000049">
    <property type="term" value="F:tRNA binding"/>
    <property type="evidence" value="ECO:0007669"/>
    <property type="project" value="UniProtKB-KW"/>
</dbReference>
<dbReference type="GO" id="GO:0006432">
    <property type="term" value="P:phenylalanyl-tRNA aminoacylation"/>
    <property type="evidence" value="ECO:0000318"/>
    <property type="project" value="GO_Central"/>
</dbReference>
<dbReference type="CDD" id="cd00769">
    <property type="entry name" value="PheRS_beta_core"/>
    <property type="match status" value="1"/>
</dbReference>
<dbReference type="CDD" id="cd02796">
    <property type="entry name" value="tRNA_bind_bactPheRS"/>
    <property type="match status" value="1"/>
</dbReference>
<dbReference type="FunFam" id="2.40.50.140:FF:000045">
    <property type="entry name" value="Phenylalanine--tRNA ligase beta subunit"/>
    <property type="match status" value="1"/>
</dbReference>
<dbReference type="FunFam" id="3.30.70.380:FF:000001">
    <property type="entry name" value="Phenylalanine--tRNA ligase beta subunit"/>
    <property type="match status" value="1"/>
</dbReference>
<dbReference type="FunFam" id="3.30.930.10:FF:000169">
    <property type="entry name" value="Phenylalanine--tRNA ligase beta subunit"/>
    <property type="match status" value="1"/>
</dbReference>
<dbReference type="FunFam" id="3.50.40.10:FF:000001">
    <property type="entry name" value="Phenylalanine--tRNA ligase beta subunit"/>
    <property type="match status" value="1"/>
</dbReference>
<dbReference type="Gene3D" id="3.30.56.10">
    <property type="match status" value="2"/>
</dbReference>
<dbReference type="Gene3D" id="3.30.930.10">
    <property type="entry name" value="Bira Bifunctional Protein, Domain 2"/>
    <property type="match status" value="1"/>
</dbReference>
<dbReference type="Gene3D" id="3.30.70.380">
    <property type="entry name" value="Ferrodoxin-fold anticodon-binding domain"/>
    <property type="match status" value="1"/>
</dbReference>
<dbReference type="Gene3D" id="2.40.50.140">
    <property type="entry name" value="Nucleic acid-binding proteins"/>
    <property type="match status" value="1"/>
</dbReference>
<dbReference type="Gene3D" id="3.50.40.10">
    <property type="entry name" value="Phenylalanyl-trna Synthetase, Chain B, domain 3"/>
    <property type="match status" value="1"/>
</dbReference>
<dbReference type="HAMAP" id="MF_00283">
    <property type="entry name" value="Phe_tRNA_synth_beta1"/>
    <property type="match status" value="1"/>
</dbReference>
<dbReference type="InterPro" id="IPR045864">
    <property type="entry name" value="aa-tRNA-synth_II/BPL/LPL"/>
</dbReference>
<dbReference type="InterPro" id="IPR005146">
    <property type="entry name" value="B3/B4_tRNA-bd"/>
</dbReference>
<dbReference type="InterPro" id="IPR009061">
    <property type="entry name" value="DNA-bd_dom_put_sf"/>
</dbReference>
<dbReference type="InterPro" id="IPR005121">
    <property type="entry name" value="Fdx_antiC-bd"/>
</dbReference>
<dbReference type="InterPro" id="IPR036690">
    <property type="entry name" value="Fdx_antiC-bd_sf"/>
</dbReference>
<dbReference type="InterPro" id="IPR012340">
    <property type="entry name" value="NA-bd_OB-fold"/>
</dbReference>
<dbReference type="InterPro" id="IPR045060">
    <property type="entry name" value="Phe-tRNA-ligase_IIc_bsu"/>
</dbReference>
<dbReference type="InterPro" id="IPR004532">
    <property type="entry name" value="Phe-tRNA-ligase_IIc_bsu_bact"/>
</dbReference>
<dbReference type="InterPro" id="IPR020825">
    <property type="entry name" value="Phe-tRNA_synthase-like_B3/B4"/>
</dbReference>
<dbReference type="InterPro" id="IPR041616">
    <property type="entry name" value="PheRS_beta_core"/>
</dbReference>
<dbReference type="InterPro" id="IPR002547">
    <property type="entry name" value="tRNA-bd_dom"/>
</dbReference>
<dbReference type="InterPro" id="IPR033714">
    <property type="entry name" value="tRNA_bind_bactPheRS"/>
</dbReference>
<dbReference type="InterPro" id="IPR005147">
    <property type="entry name" value="tRNA_synthase_B5-dom"/>
</dbReference>
<dbReference type="NCBIfam" id="TIGR00472">
    <property type="entry name" value="pheT_bact"/>
    <property type="match status" value="1"/>
</dbReference>
<dbReference type="NCBIfam" id="NF045760">
    <property type="entry name" value="YtpR"/>
    <property type="match status" value="1"/>
</dbReference>
<dbReference type="PANTHER" id="PTHR10947:SF0">
    <property type="entry name" value="PHENYLALANINE--TRNA LIGASE BETA SUBUNIT"/>
    <property type="match status" value="1"/>
</dbReference>
<dbReference type="PANTHER" id="PTHR10947">
    <property type="entry name" value="PHENYLALANYL-TRNA SYNTHETASE BETA CHAIN AND LEUCINE-RICH REPEAT-CONTAINING PROTEIN 47"/>
    <property type="match status" value="1"/>
</dbReference>
<dbReference type="Pfam" id="PF03483">
    <property type="entry name" value="B3_4"/>
    <property type="match status" value="1"/>
</dbReference>
<dbReference type="Pfam" id="PF03484">
    <property type="entry name" value="B5"/>
    <property type="match status" value="1"/>
</dbReference>
<dbReference type="Pfam" id="PF03147">
    <property type="entry name" value="FDX-ACB"/>
    <property type="match status" value="1"/>
</dbReference>
<dbReference type="Pfam" id="PF01588">
    <property type="entry name" value="tRNA_bind"/>
    <property type="match status" value="1"/>
</dbReference>
<dbReference type="Pfam" id="PF17759">
    <property type="entry name" value="tRNA_synthFbeta"/>
    <property type="match status" value="1"/>
</dbReference>
<dbReference type="SMART" id="SM00873">
    <property type="entry name" value="B3_4"/>
    <property type="match status" value="1"/>
</dbReference>
<dbReference type="SMART" id="SM00874">
    <property type="entry name" value="B5"/>
    <property type="match status" value="1"/>
</dbReference>
<dbReference type="SMART" id="SM00896">
    <property type="entry name" value="FDX-ACB"/>
    <property type="match status" value="1"/>
</dbReference>
<dbReference type="SUPFAM" id="SSF54991">
    <property type="entry name" value="Anticodon-binding domain of PheRS"/>
    <property type="match status" value="1"/>
</dbReference>
<dbReference type="SUPFAM" id="SSF55681">
    <property type="entry name" value="Class II aaRS and biotin synthetases"/>
    <property type="match status" value="1"/>
</dbReference>
<dbReference type="SUPFAM" id="SSF50249">
    <property type="entry name" value="Nucleic acid-binding proteins"/>
    <property type="match status" value="1"/>
</dbReference>
<dbReference type="SUPFAM" id="SSF56037">
    <property type="entry name" value="PheT/TilS domain"/>
    <property type="match status" value="1"/>
</dbReference>
<dbReference type="SUPFAM" id="SSF46955">
    <property type="entry name" value="Putative DNA-binding domain"/>
    <property type="match status" value="1"/>
</dbReference>
<dbReference type="PROSITE" id="PS51483">
    <property type="entry name" value="B5"/>
    <property type="match status" value="1"/>
</dbReference>
<dbReference type="PROSITE" id="PS51447">
    <property type="entry name" value="FDX_ACB"/>
    <property type="match status" value="1"/>
</dbReference>
<dbReference type="PROSITE" id="PS50886">
    <property type="entry name" value="TRBD"/>
    <property type="match status" value="1"/>
</dbReference>
<sequence length="820" mass="90920">MNISYNWLKEYVNFDLTPDETAAALTSIGLETGGVEEVQTIKGGLEGLVIGEVLTCEEHPNSDHLHITTVNLGDGEPVQIVCGAPNVAAGQKVVVATLGTKLYDGDECFTIKKSKIRGVESTGMICAEDEIGIGTDHAGIIVLPAEAVPGTLAKDYYNIKSDYVLEVDITPNRADACSHYGVARDLYAYLIQNGKQATLQRPSVDGFKVENHDLDIEVVVENSEACPHYAGVTVKGVTVKESPEWLQNKLRLIGVRPINNVVDITNYIVHAFGQPLHCFDAGKIKGNEVIVKTLPEGTPFVTLDEVERKLSERDLMICNKEEAMCIAGVFGGLDSGSTEATTDVFIESAYFHPTWVRKTARRHGLNTDASFRFERGIDPNGVIYCLKLAALMVKELAGGTISSEIKDVCVAVPQDFMVELSYEKVNSLIGKVIPVETIKSIVTSLEMKIMNETVDGLTLAVPPYRVDVQRDCDVIEDILRIYGYNNVEIPTTLNSSLTTKGEHDKSNKLQNLVAEQLVGCGFNEILNNSLTRAAYYDGLENYSSNHLVMLLNPLSADLNCMRQTLLFGGLESIAHNANRKNADLKFFEFGNCYYFDADKKNPEKVLATYSEDYHLGLWVTGKKVANSWAHPDENSSVYELKAYVENILKRLGLDLHNLVVGNLTDDIFATALSVHTKGGKRLASFGVVTKKLLKAFDIDNEVYYADLNWKELMKAIRSVKISYKEISKFPAVKRDLALLLDKNVQFAEIEKIAYDTEKKLLKEVELFDVYEGKNIEAGKKSYAVSFLLQDETQTLNDKMIDKIMSKLVKNLEDKLNAKLR</sequence>
<protein>
    <recommendedName>
        <fullName evidence="1">Phenylalanine--tRNA ligase beta subunit</fullName>
        <ecNumber evidence="1">6.1.1.20</ecNumber>
    </recommendedName>
    <alternativeName>
        <fullName evidence="1">Phenylalanyl-tRNA synthetase beta subunit</fullName>
        <shortName evidence="1">PheRS</shortName>
    </alternativeName>
</protein>